<accession>O84859</accession>
<dbReference type="EC" id="3.4.11.18" evidence="1"/>
<dbReference type="EMBL" id="AE001273">
    <property type="protein sequence ID" value="AAC68448.1"/>
    <property type="molecule type" value="Genomic_DNA"/>
</dbReference>
<dbReference type="PIR" id="D71462">
    <property type="entry name" value="D71462"/>
</dbReference>
<dbReference type="RefSeq" id="NP_220373.1">
    <property type="nucleotide sequence ID" value="NC_000117.1"/>
</dbReference>
<dbReference type="RefSeq" id="WP_009872240.1">
    <property type="nucleotide sequence ID" value="NC_000117.1"/>
</dbReference>
<dbReference type="SMR" id="O84859"/>
<dbReference type="FunCoup" id="O84859">
    <property type="interactions" value="220"/>
</dbReference>
<dbReference type="STRING" id="272561.CT_851"/>
<dbReference type="EnsemblBacteria" id="AAC68448">
    <property type="protein sequence ID" value="AAC68448"/>
    <property type="gene ID" value="CT_851"/>
</dbReference>
<dbReference type="GeneID" id="884653"/>
<dbReference type="KEGG" id="ctr:CT_851"/>
<dbReference type="PATRIC" id="fig|272561.5.peg.940"/>
<dbReference type="HOGENOM" id="CLU_015857_0_0_0"/>
<dbReference type="InParanoid" id="O84859"/>
<dbReference type="OrthoDB" id="9802055at2"/>
<dbReference type="Proteomes" id="UP000000431">
    <property type="component" value="Chromosome"/>
</dbReference>
<dbReference type="GO" id="GO:0005829">
    <property type="term" value="C:cytosol"/>
    <property type="evidence" value="ECO:0000318"/>
    <property type="project" value="GO_Central"/>
</dbReference>
<dbReference type="GO" id="GO:0004239">
    <property type="term" value="F:initiator methionyl aminopeptidase activity"/>
    <property type="evidence" value="ECO:0007669"/>
    <property type="project" value="UniProtKB-UniRule"/>
</dbReference>
<dbReference type="GO" id="GO:0046872">
    <property type="term" value="F:metal ion binding"/>
    <property type="evidence" value="ECO:0007669"/>
    <property type="project" value="UniProtKB-UniRule"/>
</dbReference>
<dbReference type="GO" id="GO:0070006">
    <property type="term" value="F:metalloaminopeptidase activity"/>
    <property type="evidence" value="ECO:0000318"/>
    <property type="project" value="GO_Central"/>
</dbReference>
<dbReference type="GO" id="GO:0006508">
    <property type="term" value="P:proteolysis"/>
    <property type="evidence" value="ECO:0007669"/>
    <property type="project" value="UniProtKB-KW"/>
</dbReference>
<dbReference type="CDD" id="cd01086">
    <property type="entry name" value="MetAP1"/>
    <property type="match status" value="1"/>
</dbReference>
<dbReference type="Gene3D" id="3.10.450.50">
    <property type="match status" value="1"/>
</dbReference>
<dbReference type="Gene3D" id="3.90.230.10">
    <property type="entry name" value="Creatinase/methionine aminopeptidase superfamily"/>
    <property type="match status" value="1"/>
</dbReference>
<dbReference type="HAMAP" id="MF_01974">
    <property type="entry name" value="MetAP_1"/>
    <property type="match status" value="1"/>
</dbReference>
<dbReference type="InterPro" id="IPR036005">
    <property type="entry name" value="Creatinase/aminopeptidase-like"/>
</dbReference>
<dbReference type="InterPro" id="IPR000994">
    <property type="entry name" value="Pept_M24"/>
</dbReference>
<dbReference type="InterPro" id="IPR001714">
    <property type="entry name" value="Pept_M24_MAP"/>
</dbReference>
<dbReference type="InterPro" id="IPR002467">
    <property type="entry name" value="Pept_M24A_MAP1"/>
</dbReference>
<dbReference type="InterPro" id="IPR004027">
    <property type="entry name" value="SEC_C_motif"/>
</dbReference>
<dbReference type="NCBIfam" id="TIGR00500">
    <property type="entry name" value="met_pdase_I"/>
    <property type="match status" value="1"/>
</dbReference>
<dbReference type="NCBIfam" id="NF008970">
    <property type="entry name" value="PRK12318.1"/>
    <property type="match status" value="1"/>
</dbReference>
<dbReference type="PANTHER" id="PTHR43330">
    <property type="entry name" value="METHIONINE AMINOPEPTIDASE"/>
    <property type="match status" value="1"/>
</dbReference>
<dbReference type="PANTHER" id="PTHR43330:SF27">
    <property type="entry name" value="METHIONINE AMINOPEPTIDASE"/>
    <property type="match status" value="1"/>
</dbReference>
<dbReference type="Pfam" id="PF00557">
    <property type="entry name" value="Peptidase_M24"/>
    <property type="match status" value="1"/>
</dbReference>
<dbReference type="Pfam" id="PF02810">
    <property type="entry name" value="SEC-C"/>
    <property type="match status" value="1"/>
</dbReference>
<dbReference type="PRINTS" id="PR00599">
    <property type="entry name" value="MAPEPTIDASE"/>
</dbReference>
<dbReference type="SUPFAM" id="SSF55920">
    <property type="entry name" value="Creatinase/aminopeptidase"/>
    <property type="match status" value="1"/>
</dbReference>
<dbReference type="SUPFAM" id="SSF103642">
    <property type="entry name" value="Sec-C motif"/>
    <property type="match status" value="1"/>
</dbReference>
<dbReference type="PROSITE" id="PS00680">
    <property type="entry name" value="MAP_1"/>
    <property type="match status" value="1"/>
</dbReference>
<sequence length="291" mass="32641">MKRNDPCWCGSNKKWKHCHYPTKPERPLDNLRQLYASRYDIIIKTPEQIEKIRKACQVTAHILDALCEAAKEGVTTNELDLLSRELHKRHNAIPAPLNYGHPPFPKTICTSLNEVICHGIPNDIPLQNGDIMNIDVSCIVDGFYGDCSRMVMIGEVSEIKRKVCEASLEALNAAISILEPNLPLYEIGEVIENCAAKYGFSVVDQFVGHGVGVKFHENPFVAHHRNSCKIPLAPGMIFTIEPMINVGKKEGFIDPINHWEARTCDHQPSAQWEHAILITDSGCEVLTLLDK</sequence>
<organism>
    <name type="scientific">Chlamydia trachomatis serovar D (strain ATCC VR-885 / DSM 19411 / UW-3/Cx)</name>
    <dbReference type="NCBI Taxonomy" id="272561"/>
    <lineage>
        <taxon>Bacteria</taxon>
        <taxon>Pseudomonadati</taxon>
        <taxon>Chlamydiota</taxon>
        <taxon>Chlamydiia</taxon>
        <taxon>Chlamydiales</taxon>
        <taxon>Chlamydiaceae</taxon>
        <taxon>Chlamydia/Chlamydophila group</taxon>
        <taxon>Chlamydia</taxon>
    </lineage>
</organism>
<keyword id="KW-0031">Aminopeptidase</keyword>
<keyword id="KW-0378">Hydrolase</keyword>
<keyword id="KW-0479">Metal-binding</keyword>
<keyword id="KW-0645">Protease</keyword>
<keyword id="KW-1185">Reference proteome</keyword>
<evidence type="ECO:0000255" key="1">
    <source>
        <dbReference type="HAMAP-Rule" id="MF_01974"/>
    </source>
</evidence>
<proteinExistence type="inferred from homology"/>
<protein>
    <recommendedName>
        <fullName evidence="1">Methionine aminopeptidase</fullName>
        <shortName evidence="1">MAP</shortName>
        <shortName evidence="1">MetAP</shortName>
        <ecNumber evidence="1">3.4.11.18</ecNumber>
    </recommendedName>
    <alternativeName>
        <fullName evidence="1">Peptidase M</fullName>
    </alternativeName>
</protein>
<gene>
    <name evidence="1" type="primary">map</name>
    <name type="ordered locus">CT_851</name>
</gene>
<feature type="chain" id="PRO_0000148934" description="Methionine aminopeptidase">
    <location>
        <begin position="1"/>
        <end position="291"/>
    </location>
</feature>
<feature type="binding site" evidence="1">
    <location>
        <position position="118"/>
    </location>
    <ligand>
        <name>substrate</name>
    </ligand>
</feature>
<feature type="binding site" evidence="1">
    <location>
        <position position="135"/>
    </location>
    <ligand>
        <name>a divalent metal cation</name>
        <dbReference type="ChEBI" id="CHEBI:60240"/>
        <label>1</label>
    </ligand>
</feature>
<feature type="binding site" evidence="1">
    <location>
        <position position="146"/>
    </location>
    <ligand>
        <name>a divalent metal cation</name>
        <dbReference type="ChEBI" id="CHEBI:60240"/>
        <label>1</label>
    </ligand>
</feature>
<feature type="binding site" evidence="1">
    <location>
        <position position="146"/>
    </location>
    <ligand>
        <name>a divalent metal cation</name>
        <dbReference type="ChEBI" id="CHEBI:60240"/>
        <label>2</label>
        <note>catalytic</note>
    </ligand>
</feature>
<feature type="binding site" evidence="1">
    <location>
        <position position="209"/>
    </location>
    <ligand>
        <name>a divalent metal cation</name>
        <dbReference type="ChEBI" id="CHEBI:60240"/>
        <label>2</label>
        <note>catalytic</note>
    </ligand>
</feature>
<feature type="binding site" evidence="1">
    <location>
        <position position="216"/>
    </location>
    <ligand>
        <name>substrate</name>
    </ligand>
</feature>
<feature type="binding site" evidence="1">
    <location>
        <position position="241"/>
    </location>
    <ligand>
        <name>a divalent metal cation</name>
        <dbReference type="ChEBI" id="CHEBI:60240"/>
        <label>2</label>
        <note>catalytic</note>
    </ligand>
</feature>
<feature type="binding site" evidence="1">
    <location>
        <position position="273"/>
    </location>
    <ligand>
        <name>a divalent metal cation</name>
        <dbReference type="ChEBI" id="CHEBI:60240"/>
        <label>1</label>
    </ligand>
</feature>
<feature type="binding site" evidence="1">
    <location>
        <position position="273"/>
    </location>
    <ligand>
        <name>a divalent metal cation</name>
        <dbReference type="ChEBI" id="CHEBI:60240"/>
        <label>2</label>
        <note>catalytic</note>
    </ligand>
</feature>
<reference key="1">
    <citation type="journal article" date="1998" name="Science">
        <title>Genome sequence of an obligate intracellular pathogen of humans: Chlamydia trachomatis.</title>
        <authorList>
            <person name="Stephens R.S."/>
            <person name="Kalman S."/>
            <person name="Lammel C.J."/>
            <person name="Fan J."/>
            <person name="Marathe R."/>
            <person name="Aravind L."/>
            <person name="Mitchell W.P."/>
            <person name="Olinger L."/>
            <person name="Tatusov R.L."/>
            <person name="Zhao Q."/>
            <person name="Koonin E.V."/>
            <person name="Davis R.W."/>
        </authorList>
    </citation>
    <scope>NUCLEOTIDE SEQUENCE [LARGE SCALE GENOMIC DNA]</scope>
    <source>
        <strain>ATCC VR-885 / DSM 19411 / UW-3/Cx</strain>
    </source>
</reference>
<name>MAP1_CHLTR</name>
<comment type="function">
    <text evidence="1">Removes the N-terminal methionine from nascent proteins. The N-terminal methionine is often cleaved when the second residue in the primary sequence is small and uncharged (Met-Ala-, Cys, Gly, Pro, Ser, Thr, or Val). Requires deformylation of the N(alpha)-formylated initiator methionine before it can be hydrolyzed.</text>
</comment>
<comment type="catalytic activity">
    <reaction evidence="1">
        <text>Release of N-terminal amino acids, preferentially methionine, from peptides and arylamides.</text>
        <dbReference type="EC" id="3.4.11.18"/>
    </reaction>
</comment>
<comment type="cofactor">
    <cofactor evidence="1">
        <name>Co(2+)</name>
        <dbReference type="ChEBI" id="CHEBI:48828"/>
    </cofactor>
    <cofactor evidence="1">
        <name>Zn(2+)</name>
        <dbReference type="ChEBI" id="CHEBI:29105"/>
    </cofactor>
    <cofactor evidence="1">
        <name>Mn(2+)</name>
        <dbReference type="ChEBI" id="CHEBI:29035"/>
    </cofactor>
    <cofactor evidence="1">
        <name>Fe(2+)</name>
        <dbReference type="ChEBI" id="CHEBI:29033"/>
    </cofactor>
    <text evidence="1">Binds 2 divalent metal cations per subunit. Has a high-affinity and a low affinity metal-binding site. The true nature of the physiological cofactor is under debate. The enzyme is active with cobalt, zinc, manganese or divalent iron ions. Most likely, methionine aminopeptidases function as mononuclear Fe(2+)-metalloproteases under physiological conditions, and the catalytically relevant metal-binding site has been assigned to the histidine-containing high-affinity site.</text>
</comment>
<comment type="subunit">
    <text evidence="1">Monomer.</text>
</comment>
<comment type="similarity">
    <text evidence="1">Belongs to the peptidase M24A family. Methionine aminopeptidase type 1 subfamily.</text>
</comment>